<evidence type="ECO:0000250" key="1"/>
<evidence type="ECO:0000305" key="2"/>
<dbReference type="EC" id="2.7.1.82"/>
<dbReference type="EMBL" id="AC005168">
    <property type="protein sequence ID" value="AAC32242.1"/>
    <property type="molecule type" value="Genomic_DNA"/>
</dbReference>
<dbReference type="EMBL" id="CP002685">
    <property type="protein sequence ID" value="AEC07895.1"/>
    <property type="molecule type" value="Genomic_DNA"/>
</dbReference>
<dbReference type="EMBL" id="AK229423">
    <property type="protein sequence ID" value="BAF01284.1"/>
    <property type="molecule type" value="mRNA"/>
</dbReference>
<dbReference type="EMBL" id="AY087681">
    <property type="protein sequence ID" value="AAM65218.1"/>
    <property type="molecule type" value="mRNA"/>
</dbReference>
<dbReference type="PIR" id="T02652">
    <property type="entry name" value="T02652"/>
</dbReference>
<dbReference type="RefSeq" id="NP_180251.1">
    <property type="nucleotide sequence ID" value="NM_128240.4"/>
</dbReference>
<dbReference type="SMR" id="O81024"/>
<dbReference type="FunCoup" id="O81024">
    <property type="interactions" value="3753"/>
</dbReference>
<dbReference type="STRING" id="3702.O81024"/>
<dbReference type="PaxDb" id="3702-AT2G26830.1"/>
<dbReference type="ProteomicsDB" id="220657"/>
<dbReference type="DNASU" id="817224"/>
<dbReference type="EnsemblPlants" id="AT2G26830.1">
    <property type="protein sequence ID" value="AT2G26830.1"/>
    <property type="gene ID" value="AT2G26830"/>
</dbReference>
<dbReference type="GeneID" id="817224"/>
<dbReference type="Gramene" id="AT2G26830.1">
    <property type="protein sequence ID" value="AT2G26830.1"/>
    <property type="gene ID" value="AT2G26830"/>
</dbReference>
<dbReference type="KEGG" id="ath:AT2G26830"/>
<dbReference type="Araport" id="AT2G26830"/>
<dbReference type="TAIR" id="AT2G26830">
    <property type="gene designation" value="EMB1187"/>
</dbReference>
<dbReference type="eggNOG" id="KOG4720">
    <property type="taxonomic scope" value="Eukaryota"/>
</dbReference>
<dbReference type="HOGENOM" id="CLU_012712_0_0_1"/>
<dbReference type="InParanoid" id="O81024"/>
<dbReference type="OMA" id="PMIWTKT"/>
<dbReference type="OrthoDB" id="10267235at2759"/>
<dbReference type="PhylomeDB" id="O81024"/>
<dbReference type="BioCyc" id="ARA:AT2G26830-MONOMER"/>
<dbReference type="BRENDA" id="2.7.1.82">
    <property type="organism ID" value="399"/>
</dbReference>
<dbReference type="UniPathway" id="UPA00558">
    <property type="reaction ID" value="UER00741"/>
</dbReference>
<dbReference type="PRO" id="PR:O81024"/>
<dbReference type="Proteomes" id="UP000006548">
    <property type="component" value="Chromosome 2"/>
</dbReference>
<dbReference type="ExpressionAtlas" id="O81024">
    <property type="expression patterns" value="baseline and differential"/>
</dbReference>
<dbReference type="GO" id="GO:0005886">
    <property type="term" value="C:plasma membrane"/>
    <property type="evidence" value="ECO:0000314"/>
    <property type="project" value="TAIR"/>
</dbReference>
<dbReference type="GO" id="GO:0005524">
    <property type="term" value="F:ATP binding"/>
    <property type="evidence" value="ECO:0007669"/>
    <property type="project" value="UniProtKB-KW"/>
</dbReference>
<dbReference type="GO" id="GO:0004305">
    <property type="term" value="F:ethanolamine kinase activity"/>
    <property type="evidence" value="ECO:0007669"/>
    <property type="project" value="UniProtKB-EC"/>
</dbReference>
<dbReference type="GO" id="GO:0006646">
    <property type="term" value="P:phosphatidylethanolamine biosynthetic process"/>
    <property type="evidence" value="ECO:0007669"/>
    <property type="project" value="UniProtKB-UniPathway"/>
</dbReference>
<dbReference type="GO" id="GO:0008654">
    <property type="term" value="P:phospholipid biosynthetic process"/>
    <property type="evidence" value="ECO:0000315"/>
    <property type="project" value="TAIR"/>
</dbReference>
<dbReference type="CDD" id="cd05157">
    <property type="entry name" value="ETNK_euk"/>
    <property type="match status" value="1"/>
</dbReference>
<dbReference type="Gene3D" id="3.90.1200.10">
    <property type="match status" value="1"/>
</dbReference>
<dbReference type="Gene3D" id="3.30.200.20">
    <property type="entry name" value="Phosphorylase Kinase, domain 1"/>
    <property type="match status" value="1"/>
</dbReference>
<dbReference type="InterPro" id="IPR011009">
    <property type="entry name" value="Kinase-like_dom_sf"/>
</dbReference>
<dbReference type="PANTHER" id="PTHR22603">
    <property type="entry name" value="CHOLINE/ETHANOALAMINE KINASE"/>
    <property type="match status" value="1"/>
</dbReference>
<dbReference type="PANTHER" id="PTHR22603:SF66">
    <property type="entry name" value="ETHANOLAMINE KINASE"/>
    <property type="match status" value="1"/>
</dbReference>
<dbReference type="Pfam" id="PF01633">
    <property type="entry name" value="Choline_kinase"/>
    <property type="match status" value="1"/>
</dbReference>
<dbReference type="SUPFAM" id="SSF56112">
    <property type="entry name" value="Protein kinase-like (PK-like)"/>
    <property type="match status" value="1"/>
</dbReference>
<name>EKI_ARATH</name>
<feature type="chain" id="PRO_0000423349" description="Probable ethanolamine kinase">
    <location>
        <begin position="1"/>
        <end position="374"/>
    </location>
</feature>
<feature type="binding site" evidence="1">
    <location>
        <position position="93"/>
    </location>
    <ligand>
        <name>ATP</name>
        <dbReference type="ChEBI" id="CHEBI:30616"/>
    </ligand>
</feature>
<feature type="binding site" evidence="1">
    <location>
        <position position="252"/>
    </location>
    <ligand>
        <name>ATP</name>
        <dbReference type="ChEBI" id="CHEBI:30616"/>
    </ligand>
</feature>
<feature type="sequence conflict" description="In Ref. 4; AAM65218." evidence="2" ref="4">
    <original>P</original>
    <variation>Q</variation>
    <location>
        <position position="150"/>
    </location>
</feature>
<feature type="sequence conflict" description="In Ref. 4; AAM65218." evidence="2" ref="4">
    <original>K</original>
    <variation>T</variation>
    <location>
        <position position="211"/>
    </location>
</feature>
<feature type="sequence conflict" description="In Ref. 4; AAM65218." evidence="2" ref="4">
    <original>L</original>
    <variation>M</variation>
    <location>
        <position position="374"/>
    </location>
</feature>
<proteinExistence type="evidence at transcript level"/>
<accession>O81024</accession>
<accession>Q8LAQ2</accession>
<organism>
    <name type="scientific">Arabidopsis thaliana</name>
    <name type="common">Mouse-ear cress</name>
    <dbReference type="NCBI Taxonomy" id="3702"/>
    <lineage>
        <taxon>Eukaryota</taxon>
        <taxon>Viridiplantae</taxon>
        <taxon>Streptophyta</taxon>
        <taxon>Embryophyta</taxon>
        <taxon>Tracheophyta</taxon>
        <taxon>Spermatophyta</taxon>
        <taxon>Magnoliopsida</taxon>
        <taxon>eudicotyledons</taxon>
        <taxon>Gunneridae</taxon>
        <taxon>Pentapetalae</taxon>
        <taxon>rosids</taxon>
        <taxon>malvids</taxon>
        <taxon>Brassicales</taxon>
        <taxon>Brassicaceae</taxon>
        <taxon>Camelineae</taxon>
        <taxon>Arabidopsis</taxon>
    </lineage>
</organism>
<reference key="1">
    <citation type="journal article" date="1999" name="Nature">
        <title>Sequence and analysis of chromosome 2 of the plant Arabidopsis thaliana.</title>
        <authorList>
            <person name="Lin X."/>
            <person name="Kaul S."/>
            <person name="Rounsley S.D."/>
            <person name="Shea T.P."/>
            <person name="Benito M.-I."/>
            <person name="Town C.D."/>
            <person name="Fujii C.Y."/>
            <person name="Mason T.M."/>
            <person name="Bowman C.L."/>
            <person name="Barnstead M.E."/>
            <person name="Feldblyum T.V."/>
            <person name="Buell C.R."/>
            <person name="Ketchum K.A."/>
            <person name="Lee J.J."/>
            <person name="Ronning C.M."/>
            <person name="Koo H.L."/>
            <person name="Moffat K.S."/>
            <person name="Cronin L.A."/>
            <person name="Shen M."/>
            <person name="Pai G."/>
            <person name="Van Aken S."/>
            <person name="Umayam L."/>
            <person name="Tallon L.J."/>
            <person name="Gill J.E."/>
            <person name="Adams M.D."/>
            <person name="Carrera A.J."/>
            <person name="Creasy T.H."/>
            <person name="Goodman H.M."/>
            <person name="Somerville C.R."/>
            <person name="Copenhaver G.P."/>
            <person name="Preuss D."/>
            <person name="Nierman W.C."/>
            <person name="White O."/>
            <person name="Eisen J.A."/>
            <person name="Salzberg S.L."/>
            <person name="Fraser C.M."/>
            <person name="Venter J.C."/>
        </authorList>
    </citation>
    <scope>NUCLEOTIDE SEQUENCE [LARGE SCALE GENOMIC DNA]</scope>
    <source>
        <strain>cv. Columbia</strain>
    </source>
</reference>
<reference key="2">
    <citation type="journal article" date="2017" name="Plant J.">
        <title>Araport11: a complete reannotation of the Arabidopsis thaliana reference genome.</title>
        <authorList>
            <person name="Cheng C.Y."/>
            <person name="Krishnakumar V."/>
            <person name="Chan A.P."/>
            <person name="Thibaud-Nissen F."/>
            <person name="Schobel S."/>
            <person name="Town C.D."/>
        </authorList>
    </citation>
    <scope>GENOME REANNOTATION</scope>
    <source>
        <strain>cv. Columbia</strain>
    </source>
</reference>
<reference key="3">
    <citation type="submission" date="2006-07" db="EMBL/GenBank/DDBJ databases">
        <title>Large-scale analysis of RIKEN Arabidopsis full-length (RAFL) cDNAs.</title>
        <authorList>
            <person name="Totoki Y."/>
            <person name="Seki M."/>
            <person name="Ishida J."/>
            <person name="Nakajima M."/>
            <person name="Enju A."/>
            <person name="Kamiya A."/>
            <person name="Narusaka M."/>
            <person name="Shin-i T."/>
            <person name="Nakagawa M."/>
            <person name="Sakamoto N."/>
            <person name="Oishi K."/>
            <person name="Kohara Y."/>
            <person name="Kobayashi M."/>
            <person name="Toyoda A."/>
            <person name="Sakaki Y."/>
            <person name="Sakurai T."/>
            <person name="Iida K."/>
            <person name="Akiyama K."/>
            <person name="Satou M."/>
            <person name="Toyoda T."/>
            <person name="Konagaya A."/>
            <person name="Carninci P."/>
            <person name="Kawai J."/>
            <person name="Hayashizaki Y."/>
            <person name="Shinozaki K."/>
        </authorList>
    </citation>
    <scope>NUCLEOTIDE SEQUENCE [LARGE SCALE MRNA]</scope>
    <source>
        <strain>cv. Columbia</strain>
    </source>
</reference>
<reference key="4">
    <citation type="submission" date="2002-03" db="EMBL/GenBank/DDBJ databases">
        <title>Full-length cDNA from Arabidopsis thaliana.</title>
        <authorList>
            <person name="Brover V.V."/>
            <person name="Troukhan M.E."/>
            <person name="Alexandrov N.A."/>
            <person name="Lu Y.-P."/>
            <person name="Flavell R.B."/>
            <person name="Feldmann K.A."/>
        </authorList>
    </citation>
    <scope>NUCLEOTIDE SEQUENCE [LARGE SCALE MRNA]</scope>
</reference>
<protein>
    <recommendedName>
        <fullName>Probable ethanolamine kinase</fullName>
        <ecNumber>2.7.1.82</ecNumber>
    </recommendedName>
    <alternativeName>
        <fullName>Protein EMBRYO DEFECTIVE 1187</fullName>
    </alternativeName>
</protein>
<sequence>MGAAKNIWALANAEDAANDAEQIPYSSFVVDTSLPLPLMIPRIIELCKDLFKNWGELDDSLFSVERVSGGITNLLLKVSVKEDTNKEVSVTVRLYGPNTEYVINREREILAIKYLSAAGFGAKLLGGFGNGMVQSFINARTLEPSDMREPKIAAQIARELGKFHKVDIPGSKEPQLWVDILKFYEKASTLTFEEPDKQKLFETISFEELHKEIIELREFTGLLNAPVVFAHNDLLSGNFMLNDEEEKLYLIDFEYGSYNYRGFDIGNHFNEYAGYDCDYSLYPSKEEQYHFIKHYLQPDKPDEVSIAEVESVFVETDAYKLASHLYWAIWAIIQARMSPIEFEYLGYFFLRYNEYKKQKPLTFSLVTSHLSASL</sequence>
<gene>
    <name type="primary">EMB1187</name>
    <name type="ordered locus">At2g26830</name>
    <name type="ORF">F12C20.13</name>
</gene>
<keyword id="KW-0067">ATP-binding</keyword>
<keyword id="KW-0418">Kinase</keyword>
<keyword id="KW-0444">Lipid biosynthesis</keyword>
<keyword id="KW-0443">Lipid metabolism</keyword>
<keyword id="KW-0547">Nucleotide-binding</keyword>
<keyword id="KW-0594">Phospholipid biosynthesis</keyword>
<keyword id="KW-1208">Phospholipid metabolism</keyword>
<keyword id="KW-1185">Reference proteome</keyword>
<keyword id="KW-0808">Transferase</keyword>
<comment type="function">
    <text evidence="1">Involved in phospholipid biosynthesis. Catalyzes the first step in phosphatidylethanolamine biosynthesis (By similarity).</text>
</comment>
<comment type="catalytic activity">
    <reaction>
        <text>ethanolamine + ATP = phosphoethanolamine + ADP + H(+)</text>
        <dbReference type="Rhea" id="RHEA:13069"/>
        <dbReference type="ChEBI" id="CHEBI:15378"/>
        <dbReference type="ChEBI" id="CHEBI:30616"/>
        <dbReference type="ChEBI" id="CHEBI:57603"/>
        <dbReference type="ChEBI" id="CHEBI:58190"/>
        <dbReference type="ChEBI" id="CHEBI:456216"/>
        <dbReference type="EC" id="2.7.1.82"/>
    </reaction>
</comment>
<comment type="pathway">
    <text>Phospholipid metabolism; phosphatidylethanolamine biosynthesis; phosphatidylethanolamine from ethanolamine: step 1/3.</text>
</comment>
<comment type="similarity">
    <text evidence="2">Belongs to the choline/ethanolamine kinase family.</text>
</comment>